<evidence type="ECO:0000255" key="1">
    <source>
        <dbReference type="HAMAP-Rule" id="MF_00082"/>
    </source>
</evidence>
<feature type="chain" id="PRO_0000264756" description="Acetylglutamate kinase">
    <location>
        <begin position="1"/>
        <end position="260"/>
    </location>
</feature>
<feature type="binding site" evidence="1">
    <location>
        <begin position="46"/>
        <end position="47"/>
    </location>
    <ligand>
        <name>substrate</name>
    </ligand>
</feature>
<feature type="binding site" evidence="1">
    <location>
        <position position="68"/>
    </location>
    <ligand>
        <name>substrate</name>
    </ligand>
</feature>
<feature type="binding site" evidence="1">
    <location>
        <position position="160"/>
    </location>
    <ligand>
        <name>substrate</name>
    </ligand>
</feature>
<feature type="site" description="Transition state stabilizer" evidence="1">
    <location>
        <position position="11"/>
    </location>
</feature>
<feature type="site" description="Transition state stabilizer" evidence="1">
    <location>
        <position position="219"/>
    </location>
</feature>
<dbReference type="EC" id="2.7.2.8" evidence="1"/>
<dbReference type="EMBL" id="CP000446">
    <property type="protein sequence ID" value="ABI40771.1"/>
    <property type="molecule type" value="Genomic_DNA"/>
</dbReference>
<dbReference type="RefSeq" id="WP_011624430.1">
    <property type="nucleotide sequence ID" value="NC_008321.1"/>
</dbReference>
<dbReference type="SMR" id="Q0HDU6"/>
<dbReference type="KEGG" id="she:Shewmr4_3708"/>
<dbReference type="HOGENOM" id="CLU_053680_1_1_6"/>
<dbReference type="UniPathway" id="UPA00068">
    <property type="reaction ID" value="UER00107"/>
</dbReference>
<dbReference type="GO" id="GO:0005737">
    <property type="term" value="C:cytoplasm"/>
    <property type="evidence" value="ECO:0007669"/>
    <property type="project" value="UniProtKB-SubCell"/>
</dbReference>
<dbReference type="GO" id="GO:0003991">
    <property type="term" value="F:acetylglutamate kinase activity"/>
    <property type="evidence" value="ECO:0007669"/>
    <property type="project" value="UniProtKB-UniRule"/>
</dbReference>
<dbReference type="GO" id="GO:0005524">
    <property type="term" value="F:ATP binding"/>
    <property type="evidence" value="ECO:0007669"/>
    <property type="project" value="UniProtKB-UniRule"/>
</dbReference>
<dbReference type="GO" id="GO:0042450">
    <property type="term" value="P:arginine biosynthetic process via ornithine"/>
    <property type="evidence" value="ECO:0007669"/>
    <property type="project" value="UniProtKB-UniRule"/>
</dbReference>
<dbReference type="GO" id="GO:0006526">
    <property type="term" value="P:L-arginine biosynthetic process"/>
    <property type="evidence" value="ECO:0007669"/>
    <property type="project" value="UniProtKB-UniPathway"/>
</dbReference>
<dbReference type="FunFam" id="3.40.1160.10:FF:000008">
    <property type="entry name" value="Acetylglutamate kinase"/>
    <property type="match status" value="1"/>
</dbReference>
<dbReference type="Gene3D" id="3.40.1160.10">
    <property type="entry name" value="Acetylglutamate kinase-like"/>
    <property type="match status" value="1"/>
</dbReference>
<dbReference type="HAMAP" id="MF_00082">
    <property type="entry name" value="ArgB"/>
    <property type="match status" value="1"/>
</dbReference>
<dbReference type="InterPro" id="IPR036393">
    <property type="entry name" value="AceGlu_kinase-like_sf"/>
</dbReference>
<dbReference type="InterPro" id="IPR004662">
    <property type="entry name" value="AcgluKinase_fam"/>
</dbReference>
<dbReference type="InterPro" id="IPR037528">
    <property type="entry name" value="ArgB"/>
</dbReference>
<dbReference type="InterPro" id="IPR001048">
    <property type="entry name" value="Asp/Glu/Uridylate_kinase"/>
</dbReference>
<dbReference type="NCBIfam" id="TIGR00761">
    <property type="entry name" value="argB"/>
    <property type="match status" value="1"/>
</dbReference>
<dbReference type="PANTHER" id="PTHR23342">
    <property type="entry name" value="N-ACETYLGLUTAMATE SYNTHASE"/>
    <property type="match status" value="1"/>
</dbReference>
<dbReference type="PANTHER" id="PTHR23342:SF0">
    <property type="entry name" value="N-ACETYLGLUTAMATE SYNTHASE, MITOCHONDRIAL"/>
    <property type="match status" value="1"/>
</dbReference>
<dbReference type="Pfam" id="PF00696">
    <property type="entry name" value="AA_kinase"/>
    <property type="match status" value="1"/>
</dbReference>
<dbReference type="PIRSF" id="PIRSF000728">
    <property type="entry name" value="NAGK"/>
    <property type="match status" value="1"/>
</dbReference>
<dbReference type="SUPFAM" id="SSF53633">
    <property type="entry name" value="Carbamate kinase-like"/>
    <property type="match status" value="1"/>
</dbReference>
<reference key="1">
    <citation type="submission" date="2006-08" db="EMBL/GenBank/DDBJ databases">
        <title>Complete sequence of Shewanella sp. MR-4.</title>
        <authorList>
            <consortium name="US DOE Joint Genome Institute"/>
            <person name="Copeland A."/>
            <person name="Lucas S."/>
            <person name="Lapidus A."/>
            <person name="Barry K."/>
            <person name="Detter J.C."/>
            <person name="Glavina del Rio T."/>
            <person name="Hammon N."/>
            <person name="Israni S."/>
            <person name="Dalin E."/>
            <person name="Tice H."/>
            <person name="Pitluck S."/>
            <person name="Kiss H."/>
            <person name="Brettin T."/>
            <person name="Bruce D."/>
            <person name="Han C."/>
            <person name="Tapia R."/>
            <person name="Gilna P."/>
            <person name="Schmutz J."/>
            <person name="Larimer F."/>
            <person name="Land M."/>
            <person name="Hauser L."/>
            <person name="Kyrpides N."/>
            <person name="Mikhailova N."/>
            <person name="Nealson K."/>
            <person name="Konstantinidis K."/>
            <person name="Klappenbach J."/>
            <person name="Tiedje J."/>
            <person name="Richardson P."/>
        </authorList>
    </citation>
    <scope>NUCLEOTIDE SEQUENCE [LARGE SCALE GENOMIC DNA]</scope>
    <source>
        <strain>MR-4</strain>
    </source>
</reference>
<accession>Q0HDU6</accession>
<name>ARGB_SHESM</name>
<protein>
    <recommendedName>
        <fullName evidence="1">Acetylglutamate kinase</fullName>
        <ecNumber evidence="1">2.7.2.8</ecNumber>
    </recommendedName>
    <alternativeName>
        <fullName evidence="1">N-acetyl-L-glutamate 5-phosphotransferase</fullName>
    </alternativeName>
    <alternativeName>
        <fullName evidence="1">NAG kinase</fullName>
        <shortName evidence="1">NAGK</shortName>
    </alternativeName>
</protein>
<proteinExistence type="inferred from homology"/>
<keyword id="KW-0028">Amino-acid biosynthesis</keyword>
<keyword id="KW-0055">Arginine biosynthesis</keyword>
<keyword id="KW-0067">ATP-binding</keyword>
<keyword id="KW-0963">Cytoplasm</keyword>
<keyword id="KW-0418">Kinase</keyword>
<keyword id="KW-0547">Nucleotide-binding</keyword>
<keyword id="KW-0808">Transferase</keyword>
<sequence length="260" mass="26879">MSTNNSVLVLKVGGALLQCEMGMARLMDTAAAMIADGQQVLMVHGGGCLVDEQLAANGMETVKLEGLRVTPPEQMPIIAGALAGTSNKILQGAATKAGIVSVGMSLADGNTVSAKIKDERLGLVGEVSPKDATYLKFILSQGWMPICSSIAMMDDGQMLNVNADQAATVLAKLVGGKLVLLSDVSGVLDGKGQLIPSLNGKQIAELVKQGVIEKGMKVKVEAALEVAQWMGQAVQVASWRDASQLVALAKGEAVGTQIQP</sequence>
<organism>
    <name type="scientific">Shewanella sp. (strain MR-4)</name>
    <dbReference type="NCBI Taxonomy" id="60480"/>
    <lineage>
        <taxon>Bacteria</taxon>
        <taxon>Pseudomonadati</taxon>
        <taxon>Pseudomonadota</taxon>
        <taxon>Gammaproteobacteria</taxon>
        <taxon>Alteromonadales</taxon>
        <taxon>Shewanellaceae</taxon>
        <taxon>Shewanella</taxon>
    </lineage>
</organism>
<comment type="function">
    <text evidence="1">Catalyzes the ATP-dependent phosphorylation of N-acetyl-L-glutamate.</text>
</comment>
<comment type="catalytic activity">
    <reaction evidence="1">
        <text>N-acetyl-L-glutamate + ATP = N-acetyl-L-glutamyl 5-phosphate + ADP</text>
        <dbReference type="Rhea" id="RHEA:14629"/>
        <dbReference type="ChEBI" id="CHEBI:30616"/>
        <dbReference type="ChEBI" id="CHEBI:44337"/>
        <dbReference type="ChEBI" id="CHEBI:57936"/>
        <dbReference type="ChEBI" id="CHEBI:456216"/>
        <dbReference type="EC" id="2.7.2.8"/>
    </reaction>
</comment>
<comment type="pathway">
    <text evidence="1">Amino-acid biosynthesis; L-arginine biosynthesis; N(2)-acetyl-L-ornithine from L-glutamate: step 2/4.</text>
</comment>
<comment type="subcellular location">
    <subcellularLocation>
        <location evidence="1">Cytoplasm</location>
    </subcellularLocation>
</comment>
<comment type="similarity">
    <text evidence="1">Belongs to the acetylglutamate kinase family. ArgB subfamily.</text>
</comment>
<gene>
    <name evidence="1" type="primary">argB</name>
    <name type="ordered locus">Shewmr4_3708</name>
</gene>